<accession>Q5BJQ0</accession>
<sequence length="649" mass="72226">MAAMLGDAIMVAKGLAKLTQAAVETHLQNLGLGGELILAARALQSTAVEQISMVFGKVQGQDKHEDSYATENFEDLEAEVQFSTPQAAGSSPDFSTASSLDQPLSSSLGHAHREGPAPAYVSSGPFREAGLSGQATSPLGRVNGRLFVDCRDLFLANSIQRRFFHQDQAPVGGLTAEDIEKARQAKARPESKPHKQMLSERARERKVPVTRIGRLANFGGLAVGLGFGALAEVAKKSLRSENSTGKKAVLDSSPFLSEANAERIVSTLCKVRGAALKLGQMLSIQDDAFINPHLAKIFERVRQSADFMPLKQMTKTLNNDLGPHWRDKLEYFEERPFAAASIGQVHLARLKGGREVAMKIQYPGVAQSINSDVNNLMAVLNMSNMLPEGLFPEHLIDVLRRELTLECDYQREAAYAKKFRELLKDHPFFYVPEIVDELCSPHVLTTELITGFPLDQAEGLSQEVRNEICYNILVLCLRELFEFHVMQTDPNWSNFFYDPQQHKVALLDFGATREYDRSFTDLYIQVIRAAADQDREAVLKKSIEMKFLTGYEVKAMEDAHLDAILILGEAFASEEPFDFGTQSTTEKIHNLIPIMLKHRLIPPPEETYSLHRKMGGSFLICSKLKACFPCKAMFEEAYSNYCRMKSGLQ</sequence>
<evidence type="ECO:0000250" key="1">
    <source>
        <dbReference type="UniProtKB" id="Q8NI60"/>
    </source>
</evidence>
<evidence type="ECO:0000250" key="2">
    <source>
        <dbReference type="UniProtKB" id="Q96D53"/>
    </source>
</evidence>
<evidence type="ECO:0000255" key="3"/>
<evidence type="ECO:0000256" key="4">
    <source>
        <dbReference type="SAM" id="MobiDB-lite"/>
    </source>
</evidence>
<evidence type="ECO:0000305" key="5"/>
<evidence type="ECO:0000312" key="6">
    <source>
        <dbReference type="RGD" id="1308245"/>
    </source>
</evidence>
<organism>
    <name type="scientific">Rattus norvegicus</name>
    <name type="common">Rat</name>
    <dbReference type="NCBI Taxonomy" id="10116"/>
    <lineage>
        <taxon>Eukaryota</taxon>
        <taxon>Metazoa</taxon>
        <taxon>Chordata</taxon>
        <taxon>Craniata</taxon>
        <taxon>Vertebrata</taxon>
        <taxon>Euteleostomi</taxon>
        <taxon>Mammalia</taxon>
        <taxon>Eutheria</taxon>
        <taxon>Euarchontoglires</taxon>
        <taxon>Glires</taxon>
        <taxon>Rodentia</taxon>
        <taxon>Myomorpha</taxon>
        <taxon>Muroidea</taxon>
        <taxon>Muridae</taxon>
        <taxon>Murinae</taxon>
        <taxon>Rattus</taxon>
    </lineage>
</organism>
<reference key="1">
    <citation type="journal article" date="2004" name="Genome Res.">
        <title>The status, quality, and expansion of the NIH full-length cDNA project: the Mammalian Gene Collection (MGC).</title>
        <authorList>
            <consortium name="The MGC Project Team"/>
        </authorList>
    </citation>
    <scope>NUCLEOTIDE SEQUENCE [LARGE SCALE MRNA]</scope>
    <source>
        <tissue>Liver</tissue>
    </source>
</reference>
<comment type="function">
    <text evidence="1 2">Atypical kinase involved in the biosynthesis of coenzyme Q, also named ubiquinone, an essential lipid-soluble electron transporter for aerobic cellular respiration (By similarity). Its substrate specificity is still unclear: may act as a protein kinase that mediates phosphorylation of COQ3 (By similarity). According to other reports, acts as a small molecule kinase, possibly a lipid kinase that phosphorylates a prenyl lipid in the ubiquinone biosynthesis pathway, as suggested by its ability to bind coenzyme Q lipid intermediates (By similarity). However, the small molecule kinase activity was not confirmed by another publication (By similarity). Shows an unusual selectivity for binding ADP over ATP (By similarity).</text>
</comment>
<comment type="activity regulation">
    <text evidence="1">Autoinhibited by the N-terminal domain, containing the KxGQ motif, that completely occludes the typical substrate binding pocket. Nucleotide-binding relieves inhibition.</text>
</comment>
<comment type="pathway">
    <text evidence="1">Cofactor biosynthesis; ubiquinone biosynthesis.</text>
</comment>
<comment type="subunit">
    <text evidence="1">Homodimer; homodimerizes via its transmembrane region. Interacts with the multi-subunit COQ enzyme complex, composed of at least COQ3, COQ4, COQ5, COQ6, COQ7 and COQ9.</text>
</comment>
<comment type="subcellular location">
    <subcellularLocation>
        <location evidence="1">Mitochondrion membrane</location>
        <topology evidence="3">Single-pass membrane protein</topology>
    </subcellularLocation>
</comment>
<comment type="domain">
    <text evidence="1">Adopts an atypical protein kinase-like fold: while it adopts a core fold similar to that of well-characterized protein kinase-like domains, a number of features are positioned to inhibit the kinase activity: (1) an atypical AAAS motif in an alanine-rich (A-rich) loop that replaces the canonical glycine-rich (G-rich) nucleotide-binding loop and limits ATP binding by establishing an unusual selectivity for ADP and (2) an N-terminal domain, containing the KxGQ motif, that completely occludes the typical substrate binding pocket. Nucleotide-binding opens the substrate binding pocket and flips the active site from inside the hydrophobic core into a catalytically competent, solvent-exposed posture.</text>
</comment>
<comment type="similarity">
    <text evidence="5">Belongs to the protein kinase superfamily. ADCK protein kinase family.</text>
</comment>
<protein>
    <recommendedName>
        <fullName evidence="5">Atypical kinase COQ8A, mitochondrial</fullName>
        <ecNumber evidence="1">2.7.-.-</ecNumber>
    </recommendedName>
    <alternativeName>
        <fullName evidence="1">Chaperone activity of bc1 complex-like</fullName>
        <shortName evidence="1">Chaperone-ABC1-like</shortName>
    </alternativeName>
    <alternativeName>
        <fullName evidence="1">Coenzyme Q protein 8A</fullName>
    </alternativeName>
    <alternativeName>
        <fullName>aarF domain-containing protein kinase 3</fullName>
    </alternativeName>
</protein>
<name>COQ8A_RAT</name>
<proteinExistence type="evidence at transcript level"/>
<feature type="transit peptide" description="Mitochondrion" evidence="1">
    <location>
        <begin position="1"/>
        <end position="163"/>
    </location>
</feature>
<feature type="chain" id="PRO_0000271795" description="Atypical kinase COQ8A, mitochondrial">
    <location>
        <begin position="164"/>
        <end position="649"/>
    </location>
</feature>
<feature type="transmembrane region" description="Helical" evidence="3">
    <location>
        <begin position="215"/>
        <end position="231"/>
    </location>
</feature>
<feature type="domain" description="Protein kinase">
    <location>
        <begin position="330"/>
        <end position="519"/>
    </location>
</feature>
<feature type="region of interest" description="Disordered" evidence="4">
    <location>
        <begin position="84"/>
        <end position="125"/>
    </location>
</feature>
<feature type="region of interest" description="Disordered" evidence="4">
    <location>
        <begin position="183"/>
        <end position="203"/>
    </location>
</feature>
<feature type="short sequence motif" description="KxGQ motif" evidence="1">
    <location>
        <begin position="277"/>
        <end position="280"/>
    </location>
</feature>
<feature type="short sequence motif" description="AAAS motif" evidence="1">
    <location>
        <begin position="338"/>
        <end position="341"/>
    </location>
</feature>
<feature type="compositionally biased region" description="Polar residues" evidence="4">
    <location>
        <begin position="84"/>
        <end position="108"/>
    </location>
</feature>
<feature type="active site" description="Proton acceptor" evidence="1">
    <location>
        <position position="489"/>
    </location>
</feature>
<feature type="binding site" evidence="1">
    <location>
        <position position="341"/>
    </location>
    <ligand>
        <name>ATP</name>
        <dbReference type="ChEBI" id="CHEBI:30616"/>
    </ligand>
</feature>
<feature type="binding site" evidence="1">
    <location>
        <position position="359"/>
    </location>
    <ligand>
        <name>ATP</name>
        <dbReference type="ChEBI" id="CHEBI:30616"/>
    </ligand>
</feature>
<feature type="binding site" evidence="1">
    <location>
        <begin position="446"/>
        <end position="449"/>
    </location>
    <ligand>
        <name>ATP</name>
        <dbReference type="ChEBI" id="CHEBI:30616"/>
    </ligand>
</feature>
<feature type="binding site" evidence="1">
    <location>
        <position position="494"/>
    </location>
    <ligand>
        <name>ATP</name>
        <dbReference type="ChEBI" id="CHEBI:30616"/>
    </ligand>
</feature>
<feature type="binding site" evidence="1">
    <location>
        <position position="508"/>
    </location>
    <ligand>
        <name>ATP</name>
        <dbReference type="ChEBI" id="CHEBI:30616"/>
    </ligand>
</feature>
<gene>
    <name evidence="1" type="primary">Coq8a</name>
    <name evidence="6" type="synonym">Adck3</name>
    <name evidence="1" type="synonym">Cabc1</name>
</gene>
<dbReference type="EC" id="2.7.-.-" evidence="1"/>
<dbReference type="EMBL" id="BC091388">
    <property type="protein sequence ID" value="AAH91388.1"/>
    <property type="molecule type" value="mRNA"/>
</dbReference>
<dbReference type="RefSeq" id="NP_001013203.1">
    <property type="nucleotide sequence ID" value="NM_001013185.1"/>
</dbReference>
<dbReference type="RefSeq" id="NP_001416549.1">
    <property type="nucleotide sequence ID" value="NM_001429620.1"/>
</dbReference>
<dbReference type="RefSeq" id="XP_006250449.1">
    <property type="nucleotide sequence ID" value="XM_006250387.1"/>
</dbReference>
<dbReference type="SMR" id="Q5BJQ0"/>
<dbReference type="BioGRID" id="262280">
    <property type="interactions" value="1"/>
</dbReference>
<dbReference type="FunCoup" id="Q5BJQ0">
    <property type="interactions" value="754"/>
</dbReference>
<dbReference type="STRING" id="10116.ENSRNOP00000036948"/>
<dbReference type="GlyGen" id="Q5BJQ0">
    <property type="glycosylation" value="1 site, 1 O-linked glycan (1 site)"/>
</dbReference>
<dbReference type="iPTMnet" id="Q5BJQ0"/>
<dbReference type="PhosphoSitePlus" id="Q5BJQ0"/>
<dbReference type="PaxDb" id="10116-ENSRNOP00000036948"/>
<dbReference type="Ensembl" id="ENSRNOT00000030135.5">
    <property type="protein sequence ID" value="ENSRNOP00000036948.3"/>
    <property type="gene ID" value="ENSRNOG00000043201.3"/>
</dbReference>
<dbReference type="GeneID" id="360887"/>
<dbReference type="KEGG" id="rno:360887"/>
<dbReference type="AGR" id="RGD:1308245"/>
<dbReference type="CTD" id="56997"/>
<dbReference type="RGD" id="1308245">
    <property type="gene designation" value="Coq8a"/>
</dbReference>
<dbReference type="eggNOG" id="KOG1234">
    <property type="taxonomic scope" value="Eukaryota"/>
</dbReference>
<dbReference type="GeneTree" id="ENSGT00940000156810"/>
<dbReference type="HOGENOM" id="CLU_006533_9_1_1"/>
<dbReference type="InParanoid" id="Q5BJQ0"/>
<dbReference type="OMA" id="PEYYVPR"/>
<dbReference type="OrthoDB" id="201153at2759"/>
<dbReference type="PhylomeDB" id="Q5BJQ0"/>
<dbReference type="TreeFam" id="TF300630"/>
<dbReference type="Reactome" id="R-RNO-2142789">
    <property type="pathway name" value="Ubiquinol biosynthesis"/>
</dbReference>
<dbReference type="UniPathway" id="UPA00232"/>
<dbReference type="PRO" id="PR:Q5BJQ0"/>
<dbReference type="Proteomes" id="UP000002494">
    <property type="component" value="Chromosome 13"/>
</dbReference>
<dbReference type="Bgee" id="ENSRNOG00000043201">
    <property type="expression patterns" value="Expressed in skeletal muscle tissue and 19 other cell types or tissues"/>
</dbReference>
<dbReference type="GO" id="GO:0031314">
    <property type="term" value="C:extrinsic component of mitochondrial inner membrane"/>
    <property type="evidence" value="ECO:0007669"/>
    <property type="project" value="Ensembl"/>
</dbReference>
<dbReference type="GO" id="GO:0005739">
    <property type="term" value="C:mitochondrion"/>
    <property type="evidence" value="ECO:0000250"/>
    <property type="project" value="UniProtKB"/>
</dbReference>
<dbReference type="GO" id="GO:0043531">
    <property type="term" value="F:ADP binding"/>
    <property type="evidence" value="ECO:0000250"/>
    <property type="project" value="UniProtKB"/>
</dbReference>
<dbReference type="GO" id="GO:0005524">
    <property type="term" value="F:ATP binding"/>
    <property type="evidence" value="ECO:0007669"/>
    <property type="project" value="UniProtKB-KW"/>
</dbReference>
<dbReference type="GO" id="GO:0008047">
    <property type="term" value="F:enzyme activator activity"/>
    <property type="evidence" value="ECO:0007669"/>
    <property type="project" value="Ensembl"/>
</dbReference>
<dbReference type="GO" id="GO:0016301">
    <property type="term" value="F:kinase activity"/>
    <property type="evidence" value="ECO:0000250"/>
    <property type="project" value="UniProtKB"/>
</dbReference>
<dbReference type="GO" id="GO:0004672">
    <property type="term" value="F:protein kinase activity"/>
    <property type="evidence" value="ECO:0000250"/>
    <property type="project" value="UniProtKB"/>
</dbReference>
<dbReference type="GO" id="GO:0016310">
    <property type="term" value="P:phosphorylation"/>
    <property type="evidence" value="ECO:0000250"/>
    <property type="project" value="UniProtKB"/>
</dbReference>
<dbReference type="GO" id="GO:0006744">
    <property type="term" value="P:ubiquinone biosynthetic process"/>
    <property type="evidence" value="ECO:0000250"/>
    <property type="project" value="UniProtKB"/>
</dbReference>
<dbReference type="CDD" id="cd13970">
    <property type="entry name" value="ABC1_ADCK3"/>
    <property type="match status" value="1"/>
</dbReference>
<dbReference type="InterPro" id="IPR004147">
    <property type="entry name" value="ABC1_dom"/>
</dbReference>
<dbReference type="InterPro" id="IPR034646">
    <property type="entry name" value="ADCK3_dom"/>
</dbReference>
<dbReference type="InterPro" id="IPR051409">
    <property type="entry name" value="Atypical_kinase_ADCK"/>
</dbReference>
<dbReference type="InterPro" id="IPR011009">
    <property type="entry name" value="Kinase-like_dom_sf"/>
</dbReference>
<dbReference type="PANTHER" id="PTHR43851">
    <property type="match status" value="1"/>
</dbReference>
<dbReference type="PANTHER" id="PTHR43851:SF1">
    <property type="entry name" value="ATYPICAL KINASE COQ8A, MITOCHONDRIAL"/>
    <property type="match status" value="1"/>
</dbReference>
<dbReference type="Pfam" id="PF03109">
    <property type="entry name" value="ABC1"/>
    <property type="match status" value="1"/>
</dbReference>
<dbReference type="SUPFAM" id="SSF56112">
    <property type="entry name" value="Protein kinase-like (PK-like)"/>
    <property type="match status" value="1"/>
</dbReference>
<keyword id="KW-0067">ATP-binding</keyword>
<keyword id="KW-0418">Kinase</keyword>
<keyword id="KW-0472">Membrane</keyword>
<keyword id="KW-0496">Mitochondrion</keyword>
<keyword id="KW-0547">Nucleotide-binding</keyword>
<keyword id="KW-1185">Reference proteome</keyword>
<keyword id="KW-0808">Transferase</keyword>
<keyword id="KW-0809">Transit peptide</keyword>
<keyword id="KW-0812">Transmembrane</keyword>
<keyword id="KW-1133">Transmembrane helix</keyword>
<keyword id="KW-0831">Ubiquinone biosynthesis</keyword>